<reference key="1">
    <citation type="journal article" date="2009" name="Proc. Natl. Acad. Sci. U.S.A.">
        <title>Biogeography of the Sulfolobus islandicus pan-genome.</title>
        <authorList>
            <person name="Reno M.L."/>
            <person name="Held N.L."/>
            <person name="Fields C.J."/>
            <person name="Burke P.V."/>
            <person name="Whitaker R.J."/>
        </authorList>
    </citation>
    <scope>NUCLEOTIDE SEQUENCE [LARGE SCALE GENOMIC DNA]</scope>
    <source>
        <strain>Y.G.57.14 / Yellowstone #1</strain>
    </source>
</reference>
<name>THII_SACI7</name>
<evidence type="ECO:0000255" key="1">
    <source>
        <dbReference type="HAMAP-Rule" id="MF_00021"/>
    </source>
</evidence>
<comment type="function">
    <text evidence="1">Catalyzes the ATP-dependent transfer of a sulfur to tRNA to produce 4-thiouridine in position 8 of tRNAs, which functions as a near-UV photosensor. Also catalyzes the transfer of sulfur to the sulfur carrier protein ThiS, forming ThiS-thiocarboxylate. This is a step in the synthesis of thiazole, in the thiamine biosynthesis pathway. The sulfur is donated as persulfide by IscS.</text>
</comment>
<comment type="catalytic activity">
    <reaction evidence="1">
        <text>[ThiI sulfur-carrier protein]-S-sulfanyl-L-cysteine + a uridine in tRNA + 2 reduced [2Fe-2S]-[ferredoxin] + ATP + H(+) = [ThiI sulfur-carrier protein]-L-cysteine + a 4-thiouridine in tRNA + 2 oxidized [2Fe-2S]-[ferredoxin] + AMP + diphosphate</text>
        <dbReference type="Rhea" id="RHEA:24176"/>
        <dbReference type="Rhea" id="RHEA-COMP:10000"/>
        <dbReference type="Rhea" id="RHEA-COMP:10001"/>
        <dbReference type="Rhea" id="RHEA-COMP:13337"/>
        <dbReference type="Rhea" id="RHEA-COMP:13338"/>
        <dbReference type="Rhea" id="RHEA-COMP:13339"/>
        <dbReference type="Rhea" id="RHEA-COMP:13340"/>
        <dbReference type="ChEBI" id="CHEBI:15378"/>
        <dbReference type="ChEBI" id="CHEBI:29950"/>
        <dbReference type="ChEBI" id="CHEBI:30616"/>
        <dbReference type="ChEBI" id="CHEBI:33019"/>
        <dbReference type="ChEBI" id="CHEBI:33737"/>
        <dbReference type="ChEBI" id="CHEBI:33738"/>
        <dbReference type="ChEBI" id="CHEBI:61963"/>
        <dbReference type="ChEBI" id="CHEBI:65315"/>
        <dbReference type="ChEBI" id="CHEBI:136798"/>
        <dbReference type="ChEBI" id="CHEBI:456215"/>
        <dbReference type="EC" id="2.8.1.4"/>
    </reaction>
</comment>
<comment type="catalytic activity">
    <reaction evidence="1">
        <text>[ThiS sulfur-carrier protein]-C-terminal Gly-Gly-AMP + S-sulfanyl-L-cysteinyl-[cysteine desulfurase] + AH2 = [ThiS sulfur-carrier protein]-C-terminal-Gly-aminoethanethioate + L-cysteinyl-[cysteine desulfurase] + A + AMP + 2 H(+)</text>
        <dbReference type="Rhea" id="RHEA:43340"/>
        <dbReference type="Rhea" id="RHEA-COMP:12157"/>
        <dbReference type="Rhea" id="RHEA-COMP:12158"/>
        <dbReference type="Rhea" id="RHEA-COMP:12910"/>
        <dbReference type="Rhea" id="RHEA-COMP:19908"/>
        <dbReference type="ChEBI" id="CHEBI:13193"/>
        <dbReference type="ChEBI" id="CHEBI:15378"/>
        <dbReference type="ChEBI" id="CHEBI:17499"/>
        <dbReference type="ChEBI" id="CHEBI:29950"/>
        <dbReference type="ChEBI" id="CHEBI:61963"/>
        <dbReference type="ChEBI" id="CHEBI:90618"/>
        <dbReference type="ChEBI" id="CHEBI:232372"/>
        <dbReference type="ChEBI" id="CHEBI:456215"/>
    </reaction>
</comment>
<comment type="pathway">
    <text evidence="1">Cofactor biosynthesis; thiamine diphosphate biosynthesis.</text>
</comment>
<comment type="subcellular location">
    <subcellularLocation>
        <location evidence="1">Cytoplasm</location>
    </subcellularLocation>
</comment>
<comment type="similarity">
    <text evidence="1">Belongs to the ThiI family.</text>
</comment>
<proteinExistence type="inferred from homology"/>
<dbReference type="EC" id="2.8.1.4" evidence="1"/>
<dbReference type="EMBL" id="CP001403">
    <property type="protein sequence ID" value="ACP46142.1"/>
    <property type="molecule type" value="Genomic_DNA"/>
</dbReference>
<dbReference type="RefSeq" id="WP_012716393.1">
    <property type="nucleotide sequence ID" value="NC_012622.1"/>
</dbReference>
<dbReference type="SMR" id="C3N7E8"/>
<dbReference type="GeneID" id="7807290"/>
<dbReference type="GeneID" id="7809651"/>
<dbReference type="KEGG" id="siy:YG5714_1886"/>
<dbReference type="HOGENOM" id="CLU_037952_4_0_2"/>
<dbReference type="UniPathway" id="UPA00060"/>
<dbReference type="Proteomes" id="UP000002308">
    <property type="component" value="Chromosome"/>
</dbReference>
<dbReference type="GO" id="GO:0005829">
    <property type="term" value="C:cytosol"/>
    <property type="evidence" value="ECO:0007669"/>
    <property type="project" value="TreeGrafter"/>
</dbReference>
<dbReference type="GO" id="GO:0005524">
    <property type="term" value="F:ATP binding"/>
    <property type="evidence" value="ECO:0007669"/>
    <property type="project" value="UniProtKB-UniRule"/>
</dbReference>
<dbReference type="GO" id="GO:0004810">
    <property type="term" value="F:CCA tRNA nucleotidyltransferase activity"/>
    <property type="evidence" value="ECO:0007669"/>
    <property type="project" value="InterPro"/>
</dbReference>
<dbReference type="GO" id="GO:0000049">
    <property type="term" value="F:tRNA binding"/>
    <property type="evidence" value="ECO:0007669"/>
    <property type="project" value="UniProtKB-UniRule"/>
</dbReference>
<dbReference type="GO" id="GO:0140741">
    <property type="term" value="F:tRNA-uracil-4 sulfurtransferase activity"/>
    <property type="evidence" value="ECO:0007669"/>
    <property type="project" value="UniProtKB-EC"/>
</dbReference>
<dbReference type="GO" id="GO:0009228">
    <property type="term" value="P:thiamine biosynthetic process"/>
    <property type="evidence" value="ECO:0007669"/>
    <property type="project" value="UniProtKB-KW"/>
</dbReference>
<dbReference type="GO" id="GO:0009229">
    <property type="term" value="P:thiamine diphosphate biosynthetic process"/>
    <property type="evidence" value="ECO:0007669"/>
    <property type="project" value="UniProtKB-UniRule"/>
</dbReference>
<dbReference type="GO" id="GO:0052837">
    <property type="term" value="P:thiazole biosynthetic process"/>
    <property type="evidence" value="ECO:0007669"/>
    <property type="project" value="TreeGrafter"/>
</dbReference>
<dbReference type="GO" id="GO:0002937">
    <property type="term" value="P:tRNA 4-thiouridine biosynthesis"/>
    <property type="evidence" value="ECO:0007669"/>
    <property type="project" value="TreeGrafter"/>
</dbReference>
<dbReference type="CDD" id="cd01712">
    <property type="entry name" value="PPase_ThiI"/>
    <property type="match status" value="1"/>
</dbReference>
<dbReference type="CDD" id="cd11716">
    <property type="entry name" value="THUMP_ThiI"/>
    <property type="match status" value="1"/>
</dbReference>
<dbReference type="Gene3D" id="3.30.2130.30">
    <property type="match status" value="1"/>
</dbReference>
<dbReference type="Gene3D" id="3.40.50.620">
    <property type="entry name" value="HUPs"/>
    <property type="match status" value="1"/>
</dbReference>
<dbReference type="HAMAP" id="MF_00021">
    <property type="entry name" value="ThiI"/>
    <property type="match status" value="1"/>
</dbReference>
<dbReference type="InterPro" id="IPR014729">
    <property type="entry name" value="Rossmann-like_a/b/a_fold"/>
</dbReference>
<dbReference type="InterPro" id="IPR020536">
    <property type="entry name" value="ThiI_AANH"/>
</dbReference>
<dbReference type="InterPro" id="IPR054173">
    <property type="entry name" value="ThiI_fer"/>
</dbReference>
<dbReference type="InterPro" id="IPR049961">
    <property type="entry name" value="ThiI_N"/>
</dbReference>
<dbReference type="InterPro" id="IPR004114">
    <property type="entry name" value="THUMP_dom"/>
</dbReference>
<dbReference type="InterPro" id="IPR049962">
    <property type="entry name" value="THUMP_ThiI"/>
</dbReference>
<dbReference type="InterPro" id="IPR003720">
    <property type="entry name" value="tRNA_STrfase"/>
</dbReference>
<dbReference type="InterPro" id="IPR050102">
    <property type="entry name" value="tRNA_sulfurtransferase_ThiI"/>
</dbReference>
<dbReference type="NCBIfam" id="TIGR00342">
    <property type="entry name" value="tRNA uracil 4-sulfurtransferase ThiI"/>
    <property type="match status" value="1"/>
</dbReference>
<dbReference type="PANTHER" id="PTHR43209">
    <property type="entry name" value="TRNA SULFURTRANSFERASE"/>
    <property type="match status" value="1"/>
</dbReference>
<dbReference type="PANTHER" id="PTHR43209:SF1">
    <property type="entry name" value="TRNA SULFURTRANSFERASE"/>
    <property type="match status" value="1"/>
</dbReference>
<dbReference type="Pfam" id="PF02568">
    <property type="entry name" value="ThiI"/>
    <property type="match status" value="1"/>
</dbReference>
<dbReference type="Pfam" id="PF22025">
    <property type="entry name" value="ThiI_fer"/>
    <property type="match status" value="1"/>
</dbReference>
<dbReference type="Pfam" id="PF02926">
    <property type="entry name" value="THUMP"/>
    <property type="match status" value="1"/>
</dbReference>
<dbReference type="SMART" id="SM00981">
    <property type="entry name" value="THUMP"/>
    <property type="match status" value="1"/>
</dbReference>
<dbReference type="SUPFAM" id="SSF52402">
    <property type="entry name" value="Adenine nucleotide alpha hydrolases-like"/>
    <property type="match status" value="1"/>
</dbReference>
<dbReference type="SUPFAM" id="SSF143437">
    <property type="entry name" value="THUMP domain-like"/>
    <property type="match status" value="1"/>
</dbReference>
<dbReference type="PROSITE" id="PS51165">
    <property type="entry name" value="THUMP"/>
    <property type="match status" value="1"/>
</dbReference>
<protein>
    <recommendedName>
        <fullName evidence="1">Probable tRNA sulfurtransferase</fullName>
        <ecNumber evidence="1">2.8.1.4</ecNumber>
    </recommendedName>
    <alternativeName>
        <fullName evidence="1">Sulfur carrier protein ThiS sulfurtransferase</fullName>
    </alternativeName>
    <alternativeName>
        <fullName evidence="1">Thiamine biosynthesis protein ThiI</fullName>
    </alternativeName>
    <alternativeName>
        <fullName evidence="1">tRNA 4-thiouridine synthase</fullName>
    </alternativeName>
</protein>
<gene>
    <name evidence="1" type="primary">thiI</name>
    <name type="ordered locus">YG5714_1886</name>
</gene>
<keyword id="KW-0067">ATP-binding</keyword>
<keyword id="KW-0963">Cytoplasm</keyword>
<keyword id="KW-0547">Nucleotide-binding</keyword>
<keyword id="KW-0694">RNA-binding</keyword>
<keyword id="KW-0784">Thiamine biosynthesis</keyword>
<keyword id="KW-0808">Transferase</keyword>
<keyword id="KW-0820">tRNA-binding</keyword>
<sequence length="373" mass="42291">MLIIIRPSGEIALKSPRSRRNFEHTLANNIRSVIKEGKIWRSQGVLFLEVNDNNKNIEELSKVFGIASFSPVMSIKSYNNNLEDIINKAKEVFAEIVKGKIFSVRAKRIGSHNFTSLDVQRKVGEALYPFSRGVNLENPEVEVFIEIRNDVAYFYYKIIKGPRGLPVGVAGKTVVLFSGGIDSPVATWMMMKRGSIPVILNFNLGGSVHRKFVLEELSVLRKWSGGHKLKLFIVNGTDVLIKLSQIEKRNRVVMLKRVMYKVAERLCDKANAKSITTGESLSQVSSQTMTNLYVTEYGIKYPIFRPLIGFDKEEIVELARKIGTYEYSIKLPEYCAISTKARTSVELDEVLKDEENLNIDYEKVLENSEVIEI</sequence>
<feature type="chain" id="PRO_1000201925" description="Probable tRNA sulfurtransferase">
    <location>
        <begin position="1"/>
        <end position="373"/>
    </location>
</feature>
<feature type="domain" description="THUMP" evidence="1">
    <location>
        <begin position="54"/>
        <end position="158"/>
    </location>
</feature>
<feature type="binding site" evidence="1">
    <location>
        <begin position="176"/>
        <end position="177"/>
    </location>
    <ligand>
        <name>ATP</name>
        <dbReference type="ChEBI" id="CHEBI:30616"/>
    </ligand>
</feature>
<feature type="binding site" evidence="1">
    <location>
        <begin position="201"/>
        <end position="202"/>
    </location>
    <ligand>
        <name>ATP</name>
        <dbReference type="ChEBI" id="CHEBI:30616"/>
    </ligand>
</feature>
<feature type="binding site" evidence="1">
    <location>
        <position position="256"/>
    </location>
    <ligand>
        <name>ATP</name>
        <dbReference type="ChEBI" id="CHEBI:30616"/>
    </ligand>
</feature>
<feature type="binding site" evidence="1">
    <location>
        <position position="278"/>
    </location>
    <ligand>
        <name>ATP</name>
        <dbReference type="ChEBI" id="CHEBI:30616"/>
    </ligand>
</feature>
<feature type="binding site" evidence="1">
    <location>
        <position position="287"/>
    </location>
    <ligand>
        <name>ATP</name>
        <dbReference type="ChEBI" id="CHEBI:30616"/>
    </ligand>
</feature>
<organism>
    <name type="scientific">Saccharolobus islandicus (strain Y.G.57.14 / Yellowstone #1)</name>
    <name type="common">Sulfolobus islandicus</name>
    <dbReference type="NCBI Taxonomy" id="439386"/>
    <lineage>
        <taxon>Archaea</taxon>
        <taxon>Thermoproteota</taxon>
        <taxon>Thermoprotei</taxon>
        <taxon>Sulfolobales</taxon>
        <taxon>Sulfolobaceae</taxon>
        <taxon>Saccharolobus</taxon>
    </lineage>
</organism>
<accession>C3N7E8</accession>